<reference key="1">
    <citation type="journal article" date="2013" name="Biochimie">
        <title>Identification and characterization of a taxon-specific three-finger toxin from the venom of the Green Vinesnake (Oxybelis fulgidus; family Colubridae).</title>
        <authorList>
            <person name="Heyborne W.H."/>
            <person name="Mackessy S.P."/>
        </authorList>
    </citation>
    <scope>PROTEIN SEQUENCE</scope>
    <scope>FUNCTION</scope>
    <scope>SUBUNIT</scope>
    <scope>SUBCELLULAR LOCATION</scope>
    <scope>MASS SPECTROMETRY</scope>
    <scope>TOXIC DOSE</scope>
    <scope>DISULFIDE BONDS</scope>
    <scope>PYROGLUTAMATE FORMATION AT GLN-1</scope>
    <source>
        <tissue>Venom</tissue>
    </source>
</reference>
<evidence type="ECO:0000250" key="1">
    <source>
        <dbReference type="UniProtKB" id="A0S865"/>
    </source>
</evidence>
<evidence type="ECO:0000269" key="2">
    <source>
    </source>
</evidence>
<evidence type="ECO:0000303" key="3">
    <source>
    </source>
</evidence>
<evidence type="ECO:0000305" key="4"/>
<evidence type="ECO:0000305" key="5">
    <source>
    </source>
</evidence>
<feature type="chain" id="PRO_0000424698" description="Fulgimotoxin" evidence="2">
    <location>
        <begin position="1"/>
        <end position="74"/>
    </location>
</feature>
<feature type="modified residue" description="Pyrrolidone carboxylic acid" evidence="2">
    <location>
        <position position="1"/>
    </location>
</feature>
<feature type="disulfide bond" evidence="1">
    <location>
        <begin position="10"/>
        <end position="34"/>
    </location>
</feature>
<feature type="disulfide bond" evidence="1">
    <location>
        <begin position="13"/>
        <end position="21"/>
    </location>
</feature>
<feature type="disulfide bond" evidence="1">
    <location>
        <begin position="27"/>
        <end position="51"/>
    </location>
</feature>
<feature type="disulfide bond" evidence="1">
    <location>
        <begin position="55"/>
        <end position="66"/>
    </location>
</feature>
<feature type="disulfide bond" evidence="1">
    <location>
        <begin position="67"/>
        <end position="72"/>
    </location>
</feature>
<name>3NB_OXYFU</name>
<organism>
    <name type="scientific">Oxybelis fulgidus</name>
    <name type="common">Green vine snake</name>
    <name type="synonym">Coluber fulgidus</name>
    <dbReference type="NCBI Taxonomy" id="121355"/>
    <lineage>
        <taxon>Eukaryota</taxon>
        <taxon>Metazoa</taxon>
        <taxon>Chordata</taxon>
        <taxon>Craniata</taxon>
        <taxon>Vertebrata</taxon>
        <taxon>Euteleostomi</taxon>
        <taxon>Lepidosauria</taxon>
        <taxon>Squamata</taxon>
        <taxon>Bifurcata</taxon>
        <taxon>Unidentata</taxon>
        <taxon>Episquamata</taxon>
        <taxon>Toxicofera</taxon>
        <taxon>Serpentes</taxon>
        <taxon>Colubroidea</taxon>
        <taxon>Colubridae</taxon>
        <taxon>Colubrinae</taxon>
        <taxon>Oxybelis</taxon>
    </lineage>
</organism>
<accession>C0HJD3</accession>
<protein>
    <recommendedName>
        <fullName evidence="3">Fulgimotoxin</fullName>
        <shortName evidence="3">FTx</shortName>
    </recommendedName>
</protein>
<dbReference type="SMR" id="C0HJD3"/>
<dbReference type="GO" id="GO:0005576">
    <property type="term" value="C:extracellular region"/>
    <property type="evidence" value="ECO:0007669"/>
    <property type="project" value="UniProtKB-SubCell"/>
</dbReference>
<dbReference type="GO" id="GO:0090729">
    <property type="term" value="F:toxin activity"/>
    <property type="evidence" value="ECO:0007669"/>
    <property type="project" value="UniProtKB-KW"/>
</dbReference>
<dbReference type="CDD" id="cd00206">
    <property type="entry name" value="TFP_snake_toxin"/>
    <property type="match status" value="1"/>
</dbReference>
<dbReference type="Gene3D" id="2.10.60.10">
    <property type="entry name" value="CD59"/>
    <property type="match status" value="1"/>
</dbReference>
<dbReference type="InterPro" id="IPR003571">
    <property type="entry name" value="Snake_3FTx"/>
</dbReference>
<dbReference type="InterPro" id="IPR045860">
    <property type="entry name" value="Snake_toxin-like_sf"/>
</dbReference>
<dbReference type="InterPro" id="IPR018354">
    <property type="entry name" value="Snake_toxin_con_site"/>
</dbReference>
<dbReference type="InterPro" id="IPR054131">
    <property type="entry name" value="Toxin_cobra-type"/>
</dbReference>
<dbReference type="Pfam" id="PF21947">
    <property type="entry name" value="Toxin_cobra-type"/>
    <property type="match status" value="1"/>
</dbReference>
<dbReference type="SUPFAM" id="SSF57302">
    <property type="entry name" value="Snake toxin-like"/>
    <property type="match status" value="1"/>
</dbReference>
<dbReference type="PROSITE" id="PS00272">
    <property type="entry name" value="SNAKE_TOXIN"/>
    <property type="match status" value="1"/>
</dbReference>
<keyword id="KW-0903">Direct protein sequencing</keyword>
<keyword id="KW-1015">Disulfide bond</keyword>
<keyword id="KW-0528">Neurotoxin</keyword>
<keyword id="KW-0873">Pyrrolidone carboxylic acid</keyword>
<keyword id="KW-0964">Secreted</keyword>
<keyword id="KW-0800">Toxin</keyword>
<proteinExistence type="evidence at protein level"/>
<sequence length="74" mass="8141">QAIGPPFGLCFQCNQKTSSDCFNAKRCPPFHRTCYTLYKPDGGEEWAVKGCAKGCPTAGPDERVKCCHTPRCNN</sequence>
<comment type="function">
    <text evidence="2">Reptile-specific three-finger toxin that is lethal at low doses for lizards, but not for mice. Probably acts as a neurotoxin.</text>
</comment>
<comment type="subunit">
    <text evidence="2">Monomer.</text>
</comment>
<comment type="subcellular location">
    <subcellularLocation>
        <location evidence="2">Secreted</location>
    </subcellularLocation>
</comment>
<comment type="tissue specificity">
    <text evidence="5">Expressed by the venom gland.</text>
</comment>
<comment type="PTM">
    <text evidence="2">The N-terminus is blocked.</text>
</comment>
<comment type="PTM">
    <text evidence="2">Contains 5 disulfide bonds.</text>
</comment>
<comment type="mass spectrometry" mass="8146.06" method="MALDI" evidence="2"/>
<comment type="toxic dose">
    <text evidence="2">LD(50) is 0.28 ug/g by intraperitoneal injection in A.carolinensis and 0.6 ug/g in H.frenatus.</text>
</comment>
<comment type="miscellaneous">
    <text evidence="2">Not toxic to neonate mice by intraperitoneal injection at doses up to 5 ug/g.</text>
</comment>
<comment type="similarity">
    <text evidence="4">Belongs to the three-finger toxin family. Ancestral subfamily. Boigatoxin sub-subfamily.</text>
</comment>